<comment type="function">
    <text evidence="1">Produces ATP from ADP in the presence of a proton gradient across the membrane. The V-type beta chain is a regulatory subunit.</text>
</comment>
<comment type="similarity">
    <text evidence="1">Belongs to the ATPase alpha/beta chains family.</text>
</comment>
<keyword id="KW-0066">ATP synthesis</keyword>
<keyword id="KW-0375">Hydrogen ion transport</keyword>
<keyword id="KW-0406">Ion transport</keyword>
<keyword id="KW-0813">Transport</keyword>
<name>VATB_THET2</name>
<organism>
    <name type="scientific">Thermus thermophilus (strain ATCC BAA-163 / DSM 7039 / HB27)</name>
    <dbReference type="NCBI Taxonomy" id="262724"/>
    <lineage>
        <taxon>Bacteria</taxon>
        <taxon>Thermotogati</taxon>
        <taxon>Deinococcota</taxon>
        <taxon>Deinococci</taxon>
        <taxon>Thermales</taxon>
        <taxon>Thermaceae</taxon>
        <taxon>Thermus</taxon>
    </lineage>
</organism>
<evidence type="ECO:0000255" key="1">
    <source>
        <dbReference type="HAMAP-Rule" id="MF_00310"/>
    </source>
</evidence>
<accession>Q72J73</accession>
<proteinExistence type="inferred from homology"/>
<feature type="chain" id="PRO_1000059398" description="V-type ATP synthase beta chain">
    <location>
        <begin position="1"/>
        <end position="478"/>
    </location>
</feature>
<dbReference type="EMBL" id="AE017221">
    <property type="protein sequence ID" value="AAS81250.1"/>
    <property type="molecule type" value="Genomic_DNA"/>
</dbReference>
<dbReference type="RefSeq" id="WP_011173333.1">
    <property type="nucleotide sequence ID" value="NC_005835.1"/>
</dbReference>
<dbReference type="EMDB" id="EMD-8016"/>
<dbReference type="EMDB" id="EMD-8017"/>
<dbReference type="EMDB" id="EMD-8462"/>
<dbReference type="SMR" id="Q72J73"/>
<dbReference type="GeneID" id="3169042"/>
<dbReference type="KEGG" id="tth:TT_C0906"/>
<dbReference type="eggNOG" id="COG1156">
    <property type="taxonomic scope" value="Bacteria"/>
</dbReference>
<dbReference type="HOGENOM" id="CLU_022916_0_0_0"/>
<dbReference type="OrthoDB" id="9802718at2"/>
<dbReference type="Proteomes" id="UP000000592">
    <property type="component" value="Chromosome"/>
</dbReference>
<dbReference type="GO" id="GO:0005524">
    <property type="term" value="F:ATP binding"/>
    <property type="evidence" value="ECO:0007669"/>
    <property type="project" value="UniProtKB-UniRule"/>
</dbReference>
<dbReference type="GO" id="GO:0046933">
    <property type="term" value="F:proton-transporting ATP synthase activity, rotational mechanism"/>
    <property type="evidence" value="ECO:0007669"/>
    <property type="project" value="UniProtKB-UniRule"/>
</dbReference>
<dbReference type="GO" id="GO:0042777">
    <property type="term" value="P:proton motive force-driven plasma membrane ATP synthesis"/>
    <property type="evidence" value="ECO:0007669"/>
    <property type="project" value="UniProtKB-UniRule"/>
</dbReference>
<dbReference type="CDD" id="cd18112">
    <property type="entry name" value="ATP-synt_V_A-type_beta_C"/>
    <property type="match status" value="1"/>
</dbReference>
<dbReference type="CDD" id="cd18118">
    <property type="entry name" value="ATP-synt_V_A-type_beta_N"/>
    <property type="match status" value="1"/>
</dbReference>
<dbReference type="CDD" id="cd01135">
    <property type="entry name" value="V_A-ATPase_B"/>
    <property type="match status" value="1"/>
</dbReference>
<dbReference type="Gene3D" id="3.40.50.12240">
    <property type="match status" value="1"/>
</dbReference>
<dbReference type="HAMAP" id="MF_00310">
    <property type="entry name" value="ATP_synth_B_arch"/>
    <property type="match status" value="1"/>
</dbReference>
<dbReference type="InterPro" id="IPR055190">
    <property type="entry name" value="ATP-synt_VA_C"/>
</dbReference>
<dbReference type="InterPro" id="IPR020003">
    <property type="entry name" value="ATPase_a/bsu_AS"/>
</dbReference>
<dbReference type="InterPro" id="IPR004100">
    <property type="entry name" value="ATPase_F1/V1/A1_a/bsu_N"/>
</dbReference>
<dbReference type="InterPro" id="IPR000194">
    <property type="entry name" value="ATPase_F1/V1/A1_a/bsu_nucl-bd"/>
</dbReference>
<dbReference type="InterPro" id="IPR027417">
    <property type="entry name" value="P-loop_NTPase"/>
</dbReference>
<dbReference type="InterPro" id="IPR022879">
    <property type="entry name" value="V-ATPase_su_B/beta"/>
</dbReference>
<dbReference type="NCBIfam" id="NF003235">
    <property type="entry name" value="PRK04196.1"/>
    <property type="match status" value="1"/>
</dbReference>
<dbReference type="PANTHER" id="PTHR43389">
    <property type="entry name" value="V-TYPE PROTON ATPASE SUBUNIT B"/>
    <property type="match status" value="1"/>
</dbReference>
<dbReference type="PANTHER" id="PTHR43389:SF4">
    <property type="entry name" value="V-TYPE PROTON ATPASE SUBUNIT B"/>
    <property type="match status" value="1"/>
</dbReference>
<dbReference type="Pfam" id="PF00006">
    <property type="entry name" value="ATP-synt_ab"/>
    <property type="match status" value="1"/>
</dbReference>
<dbReference type="Pfam" id="PF02874">
    <property type="entry name" value="ATP-synt_ab_N"/>
    <property type="match status" value="1"/>
</dbReference>
<dbReference type="Pfam" id="PF22919">
    <property type="entry name" value="ATP-synt_VA_C"/>
    <property type="match status" value="1"/>
</dbReference>
<dbReference type="PIRSF" id="PIRSF039114">
    <property type="entry name" value="V-ATPsynth_beta/V-ATPase_B"/>
    <property type="match status" value="1"/>
</dbReference>
<dbReference type="SUPFAM" id="SSF47917">
    <property type="entry name" value="C-terminal domain of alpha and beta subunits of F1 ATP synthase"/>
    <property type="match status" value="1"/>
</dbReference>
<dbReference type="SUPFAM" id="SSF52540">
    <property type="entry name" value="P-loop containing nucleoside triphosphate hydrolases"/>
    <property type="match status" value="1"/>
</dbReference>
<dbReference type="PROSITE" id="PS00152">
    <property type="entry name" value="ATPASE_ALPHA_BETA"/>
    <property type="match status" value="1"/>
</dbReference>
<protein>
    <recommendedName>
        <fullName evidence="1">V-type ATP synthase beta chain</fullName>
    </recommendedName>
    <alternativeName>
        <fullName evidence="1">V-ATPase subunit B</fullName>
    </alternativeName>
</protein>
<reference key="1">
    <citation type="journal article" date="2004" name="Nat. Biotechnol.">
        <title>The genome sequence of the extreme thermophile Thermus thermophilus.</title>
        <authorList>
            <person name="Henne A."/>
            <person name="Brueggemann H."/>
            <person name="Raasch C."/>
            <person name="Wiezer A."/>
            <person name="Hartsch T."/>
            <person name="Liesegang H."/>
            <person name="Johann A."/>
            <person name="Lienard T."/>
            <person name="Gohl O."/>
            <person name="Martinez-Arias R."/>
            <person name="Jacobi C."/>
            <person name="Starkuviene V."/>
            <person name="Schlenczeck S."/>
            <person name="Dencker S."/>
            <person name="Huber R."/>
            <person name="Klenk H.-P."/>
            <person name="Kramer W."/>
            <person name="Merkl R."/>
            <person name="Gottschalk G."/>
            <person name="Fritz H.-J."/>
        </authorList>
    </citation>
    <scope>NUCLEOTIDE SEQUENCE [LARGE SCALE GENOMIC DNA]</scope>
    <source>
        <strain>ATCC BAA-163 / DSM 7039 / HB27</strain>
    </source>
</reference>
<sequence length="478" mass="53160">MDLLKKEYTGITYISGPLLFVENAKDLAYGAIVDIKDGTGRVRGGQVIEVSEEYAVIQVFEETTGLDLATTSVSLVEDVARLGVSKEMLGRRFNGIGKPIDGLPPITPEKRLPITGLPLNPVARRKPEQFIQTGISTIDVMNTLVRGQKLPIFSGSGLPANEIAAQIARQATVRPDLSGEGEKEEPFAVVFAAMGITQRELSYFIQEFERTGALSRSVLFLNKADDPTIERILTPRMALTVAEYLAFEHDYHVLVILTDMTNYCEALREIGAAREEIPGRRGYPGYMYTDLATIYERAGVVEGKKGSVTQIPILSMPDDDRTHPIPDLTGYITEGQIQLSRELHRKGIYPPIDPLPSLSRLMNNGVGKGKTREDHKQVSDQLYSAYANGVDIRKLVAIIGEDALTENDRRYLQFADAFERFFINQGQQNRSIEESLQIAWALLSMLPQGELKRISKDHIGKYYGQKLEEIWGAPQALD</sequence>
<gene>
    <name evidence="1" type="primary">atpB</name>
    <name type="ordered locus">TT_C0906</name>
</gene>